<feature type="chain" id="PRO_1000044733" description="UPF0761 membrane protein YihY">
    <location>
        <begin position="1"/>
        <end position="290"/>
    </location>
</feature>
<feature type="transmembrane region" description="Helical" evidence="1">
    <location>
        <begin position="44"/>
        <end position="64"/>
    </location>
</feature>
<feature type="transmembrane region" description="Helical" evidence="1">
    <location>
        <begin position="104"/>
        <end position="124"/>
    </location>
</feature>
<feature type="transmembrane region" description="Helical" evidence="1">
    <location>
        <begin position="140"/>
        <end position="160"/>
    </location>
</feature>
<feature type="transmembrane region" description="Helical" evidence="1">
    <location>
        <begin position="183"/>
        <end position="203"/>
    </location>
</feature>
<feature type="transmembrane region" description="Helical" evidence="1">
    <location>
        <begin position="210"/>
        <end position="230"/>
    </location>
</feature>
<feature type="transmembrane region" description="Helical" evidence="1">
    <location>
        <begin position="244"/>
        <end position="264"/>
    </location>
</feature>
<organism>
    <name type="scientific">Shigella flexneri serotype 5b (strain 8401)</name>
    <dbReference type="NCBI Taxonomy" id="373384"/>
    <lineage>
        <taxon>Bacteria</taxon>
        <taxon>Pseudomonadati</taxon>
        <taxon>Pseudomonadota</taxon>
        <taxon>Gammaproteobacteria</taxon>
        <taxon>Enterobacterales</taxon>
        <taxon>Enterobacteriaceae</taxon>
        <taxon>Shigella</taxon>
    </lineage>
</organism>
<sequence>MLKTIQDKARHRTRPLWAWLKLLWQRIDEDNMTTLAGNLAYVSLLSLVPLVAVVFALFAAFPMFSDVSIQLRHFIFANFLPATGDVIQRYIEQFVANSNKMTAVGACGLIVTALLLMYSIDSALNTIWRSKRARPKIYSFAVYWMILTLGPLLAGASLAISSYLLSLRWASDLNTVIDNVLRIFPLLLSWISFWLLYSIVPTIRVPNRDAIVGAFVAALLFEAGKKGFALYITMFPSYQLIYGVLAVIPILFVWVYWTWCIVLLGAEITVTLGEYRKLKQAAEQEEDDEP</sequence>
<proteinExistence type="inferred from homology"/>
<dbReference type="EMBL" id="CP000266">
    <property type="protein sequence ID" value="ABF05643.1"/>
    <property type="molecule type" value="Genomic_DNA"/>
</dbReference>
<dbReference type="RefSeq" id="WP_000920762.1">
    <property type="nucleotide sequence ID" value="NC_008258.1"/>
</dbReference>
<dbReference type="KEGG" id="sfv:SFV_3613"/>
<dbReference type="HOGENOM" id="CLU_032288_0_0_6"/>
<dbReference type="Proteomes" id="UP000000659">
    <property type="component" value="Chromosome"/>
</dbReference>
<dbReference type="GO" id="GO:0005886">
    <property type="term" value="C:plasma membrane"/>
    <property type="evidence" value="ECO:0007669"/>
    <property type="project" value="UniProtKB-SubCell"/>
</dbReference>
<dbReference type="HAMAP" id="MF_00672">
    <property type="entry name" value="UPF0761"/>
    <property type="match status" value="1"/>
</dbReference>
<dbReference type="InterPro" id="IPR023679">
    <property type="entry name" value="UPF0761_bac"/>
</dbReference>
<dbReference type="InterPro" id="IPR017039">
    <property type="entry name" value="Virul_fac_BrkB"/>
</dbReference>
<dbReference type="NCBIfam" id="NF002457">
    <property type="entry name" value="PRK01637.1"/>
    <property type="match status" value="1"/>
</dbReference>
<dbReference type="NCBIfam" id="TIGR00765">
    <property type="entry name" value="yihY_not_rbn"/>
    <property type="match status" value="1"/>
</dbReference>
<dbReference type="PANTHER" id="PTHR30213">
    <property type="entry name" value="INNER MEMBRANE PROTEIN YHJD"/>
    <property type="match status" value="1"/>
</dbReference>
<dbReference type="PANTHER" id="PTHR30213:SF0">
    <property type="entry name" value="UPF0761 MEMBRANE PROTEIN YIHY"/>
    <property type="match status" value="1"/>
</dbReference>
<dbReference type="Pfam" id="PF03631">
    <property type="entry name" value="Virul_fac_BrkB"/>
    <property type="match status" value="1"/>
</dbReference>
<dbReference type="PIRSF" id="PIRSF035875">
    <property type="entry name" value="RNase_BN"/>
    <property type="match status" value="1"/>
</dbReference>
<keyword id="KW-0997">Cell inner membrane</keyword>
<keyword id="KW-1003">Cell membrane</keyword>
<keyword id="KW-0472">Membrane</keyword>
<keyword id="KW-0812">Transmembrane</keyword>
<keyword id="KW-1133">Transmembrane helix</keyword>
<name>YIHY_SHIF8</name>
<comment type="subcellular location">
    <subcellularLocation>
        <location evidence="1">Cell inner membrane</location>
        <topology evidence="1">Multi-pass membrane protein</topology>
    </subcellularLocation>
</comment>
<comment type="similarity">
    <text evidence="1">Belongs to the UPF0761 family.</text>
</comment>
<protein>
    <recommendedName>
        <fullName evidence="1">UPF0761 membrane protein YihY</fullName>
    </recommendedName>
</protein>
<accession>Q0SZ72</accession>
<reference key="1">
    <citation type="journal article" date="2006" name="BMC Genomics">
        <title>Complete genome sequence of Shigella flexneri 5b and comparison with Shigella flexneri 2a.</title>
        <authorList>
            <person name="Nie H."/>
            <person name="Yang F."/>
            <person name="Zhang X."/>
            <person name="Yang J."/>
            <person name="Chen L."/>
            <person name="Wang J."/>
            <person name="Xiong Z."/>
            <person name="Peng J."/>
            <person name="Sun L."/>
            <person name="Dong J."/>
            <person name="Xue Y."/>
            <person name="Xu X."/>
            <person name="Chen S."/>
            <person name="Yao Z."/>
            <person name="Shen Y."/>
            <person name="Jin Q."/>
        </authorList>
    </citation>
    <scope>NUCLEOTIDE SEQUENCE [LARGE SCALE GENOMIC DNA]</scope>
    <source>
        <strain>8401</strain>
    </source>
</reference>
<gene>
    <name evidence="1" type="primary">yihY</name>
    <name type="ordered locus">SFV_3613</name>
</gene>
<evidence type="ECO:0000255" key="1">
    <source>
        <dbReference type="HAMAP-Rule" id="MF_00672"/>
    </source>
</evidence>